<name>H13B1_CYRHA</name>
<dbReference type="EMBL" id="GU292980">
    <property type="protein sequence ID" value="ADB56796.1"/>
    <property type="molecule type" value="mRNA"/>
</dbReference>
<dbReference type="SMR" id="D2Y2A3"/>
<dbReference type="ArachnoServer" id="AS001982">
    <property type="toxin name" value="U7-theraphotoxin-Hhn1b"/>
</dbReference>
<dbReference type="GO" id="GO:0005576">
    <property type="term" value="C:extracellular region"/>
    <property type="evidence" value="ECO:0007669"/>
    <property type="project" value="UniProtKB-SubCell"/>
</dbReference>
<dbReference type="GO" id="GO:0008200">
    <property type="term" value="F:ion channel inhibitor activity"/>
    <property type="evidence" value="ECO:0007669"/>
    <property type="project" value="InterPro"/>
</dbReference>
<dbReference type="GO" id="GO:0090729">
    <property type="term" value="F:toxin activity"/>
    <property type="evidence" value="ECO:0007669"/>
    <property type="project" value="UniProtKB-KW"/>
</dbReference>
<dbReference type="InterPro" id="IPR011696">
    <property type="entry name" value="Huwentoxin-1"/>
</dbReference>
<dbReference type="Pfam" id="PF07740">
    <property type="entry name" value="Toxin_12"/>
    <property type="match status" value="1"/>
</dbReference>
<dbReference type="SUPFAM" id="SSF57059">
    <property type="entry name" value="omega toxin-like"/>
    <property type="match status" value="1"/>
</dbReference>
<protein>
    <recommendedName>
        <fullName>U7-theraphotoxin-Hhn1b</fullName>
        <shortName>U7-TRTX-Hhn1b</shortName>
    </recommendedName>
    <alternativeName>
        <fullName>Hainantoxin-XIII-2</fullName>
        <shortName>HNTX-XIII-2</shortName>
    </alternativeName>
</protein>
<accession>D2Y2A3</accession>
<sequence length="90" mass="10675">MKTAIFTVVLALAVFAVLSFGWEANEKALSEEFTELIHEKEAASETEARECRYFWGECHDHMPCCDWFVCRYKWPITYNICVWNRTFPEK</sequence>
<reference key="1">
    <citation type="journal article" date="2010" name="J. Proteome Res.">
        <title>Molecular diversification of peptide toxins from the tarantula Haplopelma hainanum (Ornithoctonus hainana) venom based on transcriptomic, peptidomic, and genomic analyses.</title>
        <authorList>
            <person name="Tang X."/>
            <person name="Zhang Y."/>
            <person name="Hu W."/>
            <person name="Xu D."/>
            <person name="Tao H."/>
            <person name="Yang X."/>
            <person name="Li Y."/>
            <person name="Jiang L."/>
            <person name="Liang S."/>
        </authorList>
    </citation>
    <scope>NUCLEOTIDE SEQUENCE [LARGE SCALE MRNA]</scope>
    <source>
        <tissue>Venom gland</tissue>
    </source>
</reference>
<keyword id="KW-1015">Disulfide bond</keyword>
<keyword id="KW-0872">Ion channel impairing toxin</keyword>
<keyword id="KW-0960">Knottin</keyword>
<keyword id="KW-0964">Secreted</keyword>
<keyword id="KW-0732">Signal</keyword>
<keyword id="KW-0800">Toxin</keyword>
<evidence type="ECO:0000250" key="1"/>
<evidence type="ECO:0000255" key="2"/>
<evidence type="ECO:0000305" key="3"/>
<organism>
    <name type="scientific">Cyriopagopus hainanus</name>
    <name type="common">Chinese bird spider</name>
    <name type="synonym">Haplopelma hainanum</name>
    <dbReference type="NCBI Taxonomy" id="209901"/>
    <lineage>
        <taxon>Eukaryota</taxon>
        <taxon>Metazoa</taxon>
        <taxon>Ecdysozoa</taxon>
        <taxon>Arthropoda</taxon>
        <taxon>Chelicerata</taxon>
        <taxon>Arachnida</taxon>
        <taxon>Araneae</taxon>
        <taxon>Mygalomorphae</taxon>
        <taxon>Theraphosidae</taxon>
        <taxon>Haplopelma</taxon>
    </lineage>
</organism>
<proteinExistence type="evidence at transcript level"/>
<comment type="function">
    <text evidence="1">Ion channel inhibitor.</text>
</comment>
<comment type="subcellular location">
    <subcellularLocation>
        <location evidence="1">Secreted</location>
    </subcellularLocation>
</comment>
<comment type="tissue specificity">
    <text>Expressed by the venom gland.</text>
</comment>
<comment type="domain">
    <text evidence="1">The presence of a 'disulfide through disulfide knot' structurally defines this protein as a knottin.</text>
</comment>
<comment type="similarity">
    <text evidence="3">Belongs to the neurotoxin 10 (Hwtx-1) family. 13 (Hntx-13) subfamily.</text>
</comment>
<feature type="signal peptide" evidence="2">
    <location>
        <begin position="1"/>
        <end position="19"/>
    </location>
</feature>
<feature type="propeptide" id="PRO_0000400695" evidence="1">
    <location>
        <begin position="20"/>
        <end position="50"/>
    </location>
</feature>
<feature type="peptide" id="PRO_0000400696" description="U7-theraphotoxin-Hhn1b">
    <location>
        <begin position="51"/>
        <end position="90"/>
    </location>
</feature>
<feature type="disulfide bond" evidence="1">
    <location>
        <begin position="51"/>
        <end position="65"/>
    </location>
</feature>
<feature type="disulfide bond" evidence="1">
    <location>
        <begin position="58"/>
        <end position="70"/>
    </location>
</feature>
<feature type="disulfide bond" evidence="1">
    <location>
        <begin position="64"/>
        <end position="81"/>
    </location>
</feature>